<proteinExistence type="evidence at protein level"/>
<name>HFL1_YEAST</name>
<gene>
    <name evidence="6" type="primary">HFL1</name>
    <name type="ordered locus">YKR051W</name>
</gene>
<feature type="chain" id="PRO_0000211558" description="Vacuole membrane protein HFL1">
    <location>
        <begin position="1"/>
        <end position="418"/>
    </location>
</feature>
<feature type="topological domain" description="Extracellular" evidence="2">
    <location>
        <begin position="1"/>
        <end position="5"/>
    </location>
</feature>
<feature type="transmembrane region" description="Helical" evidence="2">
    <location>
        <begin position="6"/>
        <end position="26"/>
    </location>
</feature>
<feature type="topological domain" description="Cytoplasmic" evidence="2">
    <location>
        <begin position="27"/>
        <end position="43"/>
    </location>
</feature>
<feature type="transmembrane region" description="Helical" evidence="2">
    <location>
        <begin position="44"/>
        <end position="64"/>
    </location>
</feature>
<feature type="topological domain" description="Extracellular" evidence="2">
    <location>
        <begin position="65"/>
        <end position="78"/>
    </location>
</feature>
<feature type="transmembrane region" description="Helical" evidence="2">
    <location>
        <begin position="79"/>
        <end position="99"/>
    </location>
</feature>
<feature type="topological domain" description="Cytoplasmic" evidence="2">
    <location>
        <begin position="100"/>
        <end position="141"/>
    </location>
</feature>
<feature type="transmembrane region" description="Helical" evidence="2">
    <location>
        <begin position="142"/>
        <end position="162"/>
    </location>
</feature>
<feature type="topological domain" description="Extracellular" evidence="2">
    <location>
        <begin position="163"/>
        <end position="168"/>
    </location>
</feature>
<feature type="transmembrane region" description="Helical" evidence="2">
    <location>
        <begin position="169"/>
        <end position="189"/>
    </location>
</feature>
<feature type="topological domain" description="Cytoplasmic" evidence="2">
    <location>
        <begin position="190"/>
        <end position="205"/>
    </location>
</feature>
<feature type="transmembrane region" description="Helical" evidence="2">
    <location>
        <begin position="206"/>
        <end position="226"/>
    </location>
</feature>
<feature type="topological domain" description="Extracellular" evidence="2">
    <location>
        <begin position="227"/>
        <end position="246"/>
    </location>
</feature>
<feature type="transmembrane region" description="Helical" evidence="2">
    <location>
        <begin position="247"/>
        <end position="267"/>
    </location>
</feature>
<feature type="topological domain" description="Cytoplasmic" evidence="2">
    <location>
        <begin position="268"/>
        <end position="418"/>
    </location>
</feature>
<feature type="region of interest" description="ATG8-interacting region" evidence="1">
    <location>
        <begin position="379"/>
        <end position="402"/>
    </location>
</feature>
<feature type="mutagenesis site" description="Stronlgly reduces the interaction with ATG8. Impairs interaction with ATG8; when associated with A-375, A-384 and A-387." evidence="4 5">
    <original>W</original>
    <variation>A</variation>
    <location>
        <position position="371"/>
    </location>
</feature>
<feature type="mutagenesis site" description="Moderately reduces the interaction with ATG8." evidence="4">
    <original>D</original>
    <variation>A</variation>
    <location>
        <position position="373"/>
    </location>
</feature>
<feature type="mutagenesis site" description="Moderately reduces the interaction with ATG8." evidence="4">
    <original>D</original>
    <variation>A</variation>
    <location>
        <position position="374"/>
    </location>
</feature>
<feature type="mutagenesis site" description="Stronlgly reduces the interaction with ATG8. Impairs interaction with ATG8; when associated with A-371, A-384 and A-387." evidence="4 5">
    <original>I</original>
    <variation>A</variation>
    <location>
        <position position="375"/>
    </location>
</feature>
<feature type="mutagenesis site" description="Stronlgly reduces the interaction with ATG8. Impairs interaction with ATG8; when associated with A-371, A-375, and A-387." evidence="4 5">
    <original>D</original>
    <variation>A</variation>
    <location>
        <position position="384"/>
    </location>
</feature>
<feature type="mutagenesis site" description="Stronlgly reduces the interaction with ATG8. Impairs interaction with ATG8; when associated with A-371, A-375, and A-384." evidence="4 5">
    <original>Y</original>
    <variation>A</variation>
    <location>
        <position position="387"/>
    </location>
</feature>
<feature type="turn" evidence="9">
    <location>
        <begin position="374"/>
        <end position="377"/>
    </location>
</feature>
<organism>
    <name type="scientific">Saccharomyces cerevisiae (strain ATCC 204508 / S288c)</name>
    <name type="common">Baker's yeast</name>
    <dbReference type="NCBI Taxonomy" id="559292"/>
    <lineage>
        <taxon>Eukaryota</taxon>
        <taxon>Fungi</taxon>
        <taxon>Dikarya</taxon>
        <taxon>Ascomycota</taxon>
        <taxon>Saccharomycotina</taxon>
        <taxon>Saccharomycetes</taxon>
        <taxon>Saccharomycetales</taxon>
        <taxon>Saccharomycetaceae</taxon>
        <taxon>Saccharomyces</taxon>
    </lineage>
</organism>
<accession>P36142</accession>
<accession>D6VXB2</accession>
<dbReference type="EMBL" id="Z28276">
    <property type="protein sequence ID" value="CAA82129.1"/>
    <property type="molecule type" value="Genomic_DNA"/>
</dbReference>
<dbReference type="EMBL" id="AY692640">
    <property type="protein sequence ID" value="AAT92659.1"/>
    <property type="molecule type" value="Genomic_DNA"/>
</dbReference>
<dbReference type="EMBL" id="BK006944">
    <property type="protein sequence ID" value="DAA09202.1"/>
    <property type="molecule type" value="Genomic_DNA"/>
</dbReference>
<dbReference type="PIR" id="S38125">
    <property type="entry name" value="S38125"/>
</dbReference>
<dbReference type="RefSeq" id="NP_012977.3">
    <property type="nucleotide sequence ID" value="NM_001179841.3"/>
</dbReference>
<dbReference type="PDB" id="6AAG">
    <property type="method" value="X-ray"/>
    <property type="resolution" value="2.44 A"/>
    <property type="chains" value="A/B/C/D/E/F/G=368-389"/>
</dbReference>
<dbReference type="PDBsum" id="6AAG"/>
<dbReference type="SMR" id="P36142"/>
<dbReference type="BioGRID" id="34182">
    <property type="interactions" value="66"/>
</dbReference>
<dbReference type="DIP" id="DIP-6411N"/>
<dbReference type="FunCoup" id="P36142">
    <property type="interactions" value="705"/>
</dbReference>
<dbReference type="IntAct" id="P36142">
    <property type="interactions" value="1"/>
</dbReference>
<dbReference type="STRING" id="4932.YKR051W"/>
<dbReference type="iPTMnet" id="P36142"/>
<dbReference type="PaxDb" id="4932-YKR051W"/>
<dbReference type="PeptideAtlas" id="P36142"/>
<dbReference type="EnsemblFungi" id="YKR051W_mRNA">
    <property type="protein sequence ID" value="YKR051W"/>
    <property type="gene ID" value="YKR051W"/>
</dbReference>
<dbReference type="GeneID" id="853925"/>
<dbReference type="KEGG" id="sce:YKR051W"/>
<dbReference type="AGR" id="SGD:S000001759"/>
<dbReference type="SGD" id="S000001759">
    <property type="gene designation" value="HFL1"/>
</dbReference>
<dbReference type="VEuPathDB" id="FungiDB:YKR051W"/>
<dbReference type="eggNOG" id="KOG2641">
    <property type="taxonomic scope" value="Eukaryota"/>
</dbReference>
<dbReference type="GeneTree" id="ENSGT00940000155201"/>
<dbReference type="HOGENOM" id="CLU_012923_4_0_1"/>
<dbReference type="InParanoid" id="P36142"/>
<dbReference type="OMA" id="YNLALFW"/>
<dbReference type="OrthoDB" id="5348404at2759"/>
<dbReference type="BioCyc" id="YEAST:G3O-32021-MONOMER"/>
<dbReference type="BioGRID-ORCS" id="853925">
    <property type="hits" value="0 hits in 10 CRISPR screens"/>
</dbReference>
<dbReference type="PRO" id="PR:P36142"/>
<dbReference type="Proteomes" id="UP000002311">
    <property type="component" value="Chromosome XI"/>
</dbReference>
<dbReference type="RNAct" id="P36142">
    <property type="molecule type" value="protein"/>
</dbReference>
<dbReference type="GO" id="GO:0005783">
    <property type="term" value="C:endoplasmic reticulum"/>
    <property type="evidence" value="ECO:0007005"/>
    <property type="project" value="SGD"/>
</dbReference>
<dbReference type="GO" id="GO:0016020">
    <property type="term" value="C:membrane"/>
    <property type="evidence" value="ECO:0000318"/>
    <property type="project" value="GO_Central"/>
</dbReference>
<dbReference type="GO" id="GO:0005774">
    <property type="term" value="C:vacuolar membrane"/>
    <property type="evidence" value="ECO:0000314"/>
    <property type="project" value="SGD"/>
</dbReference>
<dbReference type="GO" id="GO:0022857">
    <property type="term" value="F:transmembrane transporter activity"/>
    <property type="evidence" value="ECO:0000318"/>
    <property type="project" value="GO_Central"/>
</dbReference>
<dbReference type="GO" id="GO:0044395">
    <property type="term" value="P:protein targeting to vacuolar membrane"/>
    <property type="evidence" value="ECO:0000315"/>
    <property type="project" value="SGD"/>
</dbReference>
<dbReference type="InterPro" id="IPR005178">
    <property type="entry name" value="Ostalpha/TMEM184C"/>
</dbReference>
<dbReference type="PANTHER" id="PTHR23423">
    <property type="entry name" value="ORGANIC SOLUTE TRANSPORTER-RELATED"/>
    <property type="match status" value="1"/>
</dbReference>
<dbReference type="Pfam" id="PF03619">
    <property type="entry name" value="Solute_trans_a"/>
    <property type="match status" value="1"/>
</dbReference>
<dbReference type="SMART" id="SM01417">
    <property type="entry name" value="Solute_trans_a"/>
    <property type="match status" value="1"/>
</dbReference>
<keyword id="KW-0002">3D-structure</keyword>
<keyword id="KW-0472">Membrane</keyword>
<keyword id="KW-1185">Reference proteome</keyword>
<keyword id="KW-0812">Transmembrane</keyword>
<keyword id="KW-1133">Transmembrane helix</keyword>
<keyword id="KW-0926">Vacuole</keyword>
<reference key="1">
    <citation type="journal article" date="1994" name="Nature">
        <title>Complete DNA sequence of yeast chromosome XI.</title>
        <authorList>
            <person name="Dujon B."/>
            <person name="Alexandraki D."/>
            <person name="Andre B."/>
            <person name="Ansorge W."/>
            <person name="Baladron V."/>
            <person name="Ballesta J.P.G."/>
            <person name="Banrevi A."/>
            <person name="Bolle P.-A."/>
            <person name="Bolotin-Fukuhara M."/>
            <person name="Bossier P."/>
            <person name="Bou G."/>
            <person name="Boyer J."/>
            <person name="Buitrago M.J."/>
            <person name="Cheret G."/>
            <person name="Colleaux L."/>
            <person name="Daignan-Fornier B."/>
            <person name="del Rey F."/>
            <person name="Dion C."/>
            <person name="Domdey H."/>
            <person name="Duesterhoeft A."/>
            <person name="Duesterhus S."/>
            <person name="Entian K.-D."/>
            <person name="Erfle H."/>
            <person name="Esteban P.F."/>
            <person name="Feldmann H."/>
            <person name="Fernandes L."/>
            <person name="Fobo G.M."/>
            <person name="Fritz C."/>
            <person name="Fukuhara H."/>
            <person name="Gabel C."/>
            <person name="Gaillon L."/>
            <person name="Garcia-Cantalejo J.M."/>
            <person name="Garcia-Ramirez J.J."/>
            <person name="Gent M.E."/>
            <person name="Ghazvini M."/>
            <person name="Goffeau A."/>
            <person name="Gonzalez A."/>
            <person name="Grothues D."/>
            <person name="Guerreiro P."/>
            <person name="Hegemann J.H."/>
            <person name="Hewitt N."/>
            <person name="Hilger F."/>
            <person name="Hollenberg C.P."/>
            <person name="Horaitis O."/>
            <person name="Indge K.J."/>
            <person name="Jacquier A."/>
            <person name="James C.M."/>
            <person name="Jauniaux J.-C."/>
            <person name="Jimenez A."/>
            <person name="Keuchel H."/>
            <person name="Kirchrath L."/>
            <person name="Kleine K."/>
            <person name="Koetter P."/>
            <person name="Legrain P."/>
            <person name="Liebl S."/>
            <person name="Louis E.J."/>
            <person name="Maia e Silva A."/>
            <person name="Marck C."/>
            <person name="Monnier A.-L."/>
            <person name="Moestl D."/>
            <person name="Mueller S."/>
            <person name="Obermaier B."/>
            <person name="Oliver S.G."/>
            <person name="Pallier C."/>
            <person name="Pascolo S."/>
            <person name="Pfeiffer F."/>
            <person name="Philippsen P."/>
            <person name="Planta R.J."/>
            <person name="Pohl F.M."/>
            <person name="Pohl T.M."/>
            <person name="Poehlmann R."/>
            <person name="Portetelle D."/>
            <person name="Purnelle B."/>
            <person name="Puzos V."/>
            <person name="Ramezani Rad M."/>
            <person name="Rasmussen S.W."/>
            <person name="Remacha M.A."/>
            <person name="Revuelta J.L."/>
            <person name="Richard G.-F."/>
            <person name="Rieger M."/>
            <person name="Rodrigues-Pousada C."/>
            <person name="Rose M."/>
            <person name="Rupp T."/>
            <person name="Santos M.A."/>
            <person name="Schwager C."/>
            <person name="Sensen C."/>
            <person name="Skala J."/>
            <person name="Soares H."/>
            <person name="Sor F."/>
            <person name="Stegemann J."/>
            <person name="Tettelin H."/>
            <person name="Thierry A."/>
            <person name="Tzermia M."/>
            <person name="Urrestarazu L.A."/>
            <person name="van Dyck L."/>
            <person name="van Vliet-Reedijk J.C."/>
            <person name="Valens M."/>
            <person name="Vandenbol M."/>
            <person name="Vilela C."/>
            <person name="Vissers S."/>
            <person name="von Wettstein D."/>
            <person name="Voss H."/>
            <person name="Wiemann S."/>
            <person name="Xu G."/>
            <person name="Zimmermann J."/>
            <person name="Haasemann M."/>
            <person name="Becker I."/>
            <person name="Mewes H.-W."/>
        </authorList>
    </citation>
    <scope>NUCLEOTIDE SEQUENCE [LARGE SCALE GENOMIC DNA]</scope>
    <source>
        <strain>ATCC 204508 / S288c</strain>
    </source>
</reference>
<reference key="2">
    <citation type="journal article" date="2014" name="G3 (Bethesda)">
        <title>The reference genome sequence of Saccharomyces cerevisiae: Then and now.</title>
        <authorList>
            <person name="Engel S.R."/>
            <person name="Dietrich F.S."/>
            <person name="Fisk D.G."/>
            <person name="Binkley G."/>
            <person name="Balakrishnan R."/>
            <person name="Costanzo M.C."/>
            <person name="Dwight S.S."/>
            <person name="Hitz B.C."/>
            <person name="Karra K."/>
            <person name="Nash R.S."/>
            <person name="Weng S."/>
            <person name="Wong E.D."/>
            <person name="Lloyd P."/>
            <person name="Skrzypek M.S."/>
            <person name="Miyasato S.R."/>
            <person name="Simison M."/>
            <person name="Cherry J.M."/>
        </authorList>
    </citation>
    <scope>GENOME REANNOTATION</scope>
    <source>
        <strain>ATCC 204508 / S288c</strain>
    </source>
</reference>
<reference key="3">
    <citation type="journal article" date="2007" name="Genome Res.">
        <title>Approaching a complete repository of sequence-verified protein-encoding clones for Saccharomyces cerevisiae.</title>
        <authorList>
            <person name="Hu Y."/>
            <person name="Rolfs A."/>
            <person name="Bhullar B."/>
            <person name="Murthy T.V.S."/>
            <person name="Zhu C."/>
            <person name="Berger M.F."/>
            <person name="Camargo A.A."/>
            <person name="Kelley F."/>
            <person name="McCarron S."/>
            <person name="Jepson D."/>
            <person name="Richardson A."/>
            <person name="Raphael J."/>
            <person name="Moreira D."/>
            <person name="Taycher E."/>
            <person name="Zuo D."/>
            <person name="Mohr S."/>
            <person name="Kane M.F."/>
            <person name="Williamson J."/>
            <person name="Simpson A.J.G."/>
            <person name="Bulyk M.L."/>
            <person name="Harlow E."/>
            <person name="Marsischky G."/>
            <person name="Kolodner R.D."/>
            <person name="LaBaer J."/>
        </authorList>
    </citation>
    <scope>NUCLEOTIDE SEQUENCE [GENOMIC DNA]</scope>
    <source>
        <strain>ATCC 204508 / S288c</strain>
    </source>
</reference>
<reference key="4">
    <citation type="journal article" date="2006" name="Proc. Natl. Acad. Sci. U.S.A.">
        <title>A global topology map of the Saccharomyces cerevisiae membrane proteome.</title>
        <authorList>
            <person name="Kim H."/>
            <person name="Melen K."/>
            <person name="Oesterberg M."/>
            <person name="von Heijne G."/>
        </authorList>
    </citation>
    <scope>TOPOLOGY [LARGE SCALE ANALYSIS]</scope>
    <source>
        <strain>ATCC 208353 / W303-1A</strain>
    </source>
</reference>
<reference key="5">
    <citation type="journal article" date="2021" name="BMC Biol.">
        <title>Membrane recruitment of Atg8 by Hfl1 facilitates turnover of vacuolar membrane proteins in yeast cells approaching stationary phase.</title>
        <authorList>
            <person name="He C.W."/>
            <person name="Cui X.F."/>
            <person name="Ma S.J."/>
            <person name="Xu Q."/>
            <person name="Ran Y.P."/>
            <person name="Chen W.Z."/>
            <person name="Mu J.X."/>
            <person name="Li H."/>
            <person name="Zhu J."/>
            <person name="Gong Q."/>
            <person name="Xie Z."/>
        </authorList>
    </citation>
    <scope>FUNCTION</scope>
    <scope>SUBCELLULAR LOCATION</scope>
    <scope>INTERACTION WITH ATG8</scope>
    <scope>MUTAGENESIS OF TRP-371; ILE-375; ASP-384 AND TYR-387</scope>
</reference>
<reference evidence="8" key="6">
    <citation type="journal article" date="2018" name="Elife">
        <title>Lipidation-independent vacuolar functions of Atg8 rely on its noncanonical interaction with a vacuole membrane protein.</title>
        <authorList>
            <person name="Liu X.M."/>
            <person name="Yamasaki A."/>
            <person name="Du X.M."/>
            <person name="Coffman V.C."/>
            <person name="Ohsumi Y."/>
            <person name="Nakatogawa H."/>
            <person name="Wu J.Q."/>
            <person name="Noda N.N."/>
            <person name="Du L.L."/>
        </authorList>
    </citation>
    <scope>X-RAY CRYSTALLOGRAPHY (2.44 ANGSTROMS) OF 368-389</scope>
    <scope>FUNCTION</scope>
    <scope>SUBCELLULAR LOCATION</scope>
    <scope>INTERACTION WITH ATG8</scope>
    <scope>MUTAGENESIS OF TRP-371; ASP-373; ASP-374; ILE-375; ASP-384 AND TYR-387</scope>
</reference>
<sequence length="418" mass="48757">MENKLLCWWLYWPCVYSSIIATIISFYTITRHLLNYRKPYEQRLSIRILLLVPIFSVSCASGIIKPEAAQFYVDPIREFYEAFVIYTFFTFLTLLLGGERNIITVLSLNHAPTRHPIPLIGKICKPIDLSDPFDFLFVKKGILQYVWFKPFYCFGTLICSAWKLPKFEIFLNVFYNISVTWSLYSLALFWKCLYPELTPYKPWLKFLCVKLIIFASYWQSIIIQGLVVTGKLGTGNQDRTSGYVYKNGLLCIEMVPFAILHAVAFPWNKYTAFSIPYGARMKFIYALKDFLGCGDLIWDFKQTLFAGPLYYNYRNFDPEAMDLLSTRQQSGATMERLKHGLRFTDNGRNSYWVAYGSIDNNLVPESIEESWEDDIAGQRTFPEDPNYPVVHDYTMGHRYSRSMNDLRRDVQSRSSMAC</sequence>
<comment type="function">
    <text evidence="4">Vacuole membrane protein that recruits ATG8 to facilitate the degradation of vacuolar integral membrane proteins during early-stationary vacuole turnover (EVT) when cells enter stationary phase.</text>
</comment>
<comment type="subunit">
    <text evidence="4 5">Interacts with ATG8.</text>
</comment>
<comment type="subcellular location">
    <subcellularLocation>
        <location evidence="5">Vacuole membrane</location>
        <topology evidence="3">Multi-pass membrane protein</topology>
    </subcellularLocation>
</comment>
<comment type="similarity">
    <text evidence="7">Belongs to the TMEM184 family.</text>
</comment>
<protein>
    <recommendedName>
        <fullName evidence="6">Vacuole membrane protein HFL1</fullName>
    </recommendedName>
    <alternativeName>
        <fullName evidence="6">Has fused lysosomes protein 1</fullName>
    </alternativeName>
</protein>
<evidence type="ECO:0000250" key="1">
    <source>
        <dbReference type="UniProtKB" id="Q09906"/>
    </source>
</evidence>
<evidence type="ECO:0000255" key="2"/>
<evidence type="ECO:0000269" key="3">
    <source>
    </source>
</evidence>
<evidence type="ECO:0000269" key="4">
    <source>
    </source>
</evidence>
<evidence type="ECO:0000269" key="5">
    <source>
    </source>
</evidence>
<evidence type="ECO:0000303" key="6">
    <source>
    </source>
</evidence>
<evidence type="ECO:0000305" key="7"/>
<evidence type="ECO:0007744" key="8">
    <source>
        <dbReference type="PDB" id="6AAG"/>
    </source>
</evidence>
<evidence type="ECO:0007829" key="9">
    <source>
        <dbReference type="PDB" id="6AAG"/>
    </source>
</evidence>